<feature type="chain" id="PRO_0000123165" description="Small ribosomal subunit protein uS11">
    <location>
        <begin position="1"/>
        <end position="132"/>
    </location>
</feature>
<name>RS11_LEGPL</name>
<reference key="1">
    <citation type="journal article" date="2004" name="Nat. Genet.">
        <title>Evidence in the Legionella pneumophila genome for exploitation of host cell functions and high genome plasticity.</title>
        <authorList>
            <person name="Cazalet C."/>
            <person name="Rusniok C."/>
            <person name="Brueggemann H."/>
            <person name="Zidane N."/>
            <person name="Magnier A."/>
            <person name="Ma L."/>
            <person name="Tichit M."/>
            <person name="Jarraud S."/>
            <person name="Bouchier C."/>
            <person name="Vandenesch F."/>
            <person name="Kunst F."/>
            <person name="Etienne J."/>
            <person name="Glaser P."/>
            <person name="Buchrieser C."/>
        </authorList>
    </citation>
    <scope>NUCLEOTIDE SEQUENCE [LARGE SCALE GENOMIC DNA]</scope>
    <source>
        <strain>Lens</strain>
    </source>
</reference>
<gene>
    <name evidence="1" type="primary">rpsK</name>
    <name type="ordered locus">lpl0393</name>
</gene>
<accession>Q5WZI9</accession>
<dbReference type="EMBL" id="CR628337">
    <property type="protein sequence ID" value="CAH14623.1"/>
    <property type="molecule type" value="Genomic_DNA"/>
</dbReference>
<dbReference type="RefSeq" id="WP_010946101.1">
    <property type="nucleotide sequence ID" value="NC_006369.1"/>
</dbReference>
<dbReference type="SMR" id="Q5WZI9"/>
<dbReference type="GeneID" id="57034355"/>
<dbReference type="KEGG" id="lpf:lpl0393"/>
<dbReference type="LegioList" id="lpl0393"/>
<dbReference type="HOGENOM" id="CLU_072439_5_0_6"/>
<dbReference type="Proteomes" id="UP000002517">
    <property type="component" value="Chromosome"/>
</dbReference>
<dbReference type="GO" id="GO:1990904">
    <property type="term" value="C:ribonucleoprotein complex"/>
    <property type="evidence" value="ECO:0007669"/>
    <property type="project" value="UniProtKB-KW"/>
</dbReference>
<dbReference type="GO" id="GO:0005840">
    <property type="term" value="C:ribosome"/>
    <property type="evidence" value="ECO:0007669"/>
    <property type="project" value="UniProtKB-KW"/>
</dbReference>
<dbReference type="GO" id="GO:0019843">
    <property type="term" value="F:rRNA binding"/>
    <property type="evidence" value="ECO:0007669"/>
    <property type="project" value="UniProtKB-UniRule"/>
</dbReference>
<dbReference type="GO" id="GO:0003735">
    <property type="term" value="F:structural constituent of ribosome"/>
    <property type="evidence" value="ECO:0007669"/>
    <property type="project" value="InterPro"/>
</dbReference>
<dbReference type="GO" id="GO:0006412">
    <property type="term" value="P:translation"/>
    <property type="evidence" value="ECO:0007669"/>
    <property type="project" value="UniProtKB-UniRule"/>
</dbReference>
<dbReference type="FunFam" id="3.30.420.80:FF:000001">
    <property type="entry name" value="30S ribosomal protein S11"/>
    <property type="match status" value="1"/>
</dbReference>
<dbReference type="Gene3D" id="3.30.420.80">
    <property type="entry name" value="Ribosomal protein S11"/>
    <property type="match status" value="1"/>
</dbReference>
<dbReference type="HAMAP" id="MF_01310">
    <property type="entry name" value="Ribosomal_uS11"/>
    <property type="match status" value="1"/>
</dbReference>
<dbReference type="InterPro" id="IPR001971">
    <property type="entry name" value="Ribosomal_uS11"/>
</dbReference>
<dbReference type="InterPro" id="IPR019981">
    <property type="entry name" value="Ribosomal_uS11_bac-type"/>
</dbReference>
<dbReference type="InterPro" id="IPR036967">
    <property type="entry name" value="Ribosomal_uS11_sf"/>
</dbReference>
<dbReference type="NCBIfam" id="NF003698">
    <property type="entry name" value="PRK05309.1"/>
    <property type="match status" value="1"/>
</dbReference>
<dbReference type="NCBIfam" id="TIGR03632">
    <property type="entry name" value="uS11_bact"/>
    <property type="match status" value="1"/>
</dbReference>
<dbReference type="PANTHER" id="PTHR11759">
    <property type="entry name" value="40S RIBOSOMAL PROTEIN S14/30S RIBOSOMAL PROTEIN S11"/>
    <property type="match status" value="1"/>
</dbReference>
<dbReference type="Pfam" id="PF00411">
    <property type="entry name" value="Ribosomal_S11"/>
    <property type="match status" value="1"/>
</dbReference>
<dbReference type="PIRSF" id="PIRSF002131">
    <property type="entry name" value="Ribosomal_S11"/>
    <property type="match status" value="1"/>
</dbReference>
<dbReference type="SUPFAM" id="SSF53137">
    <property type="entry name" value="Translational machinery components"/>
    <property type="match status" value="1"/>
</dbReference>
<comment type="function">
    <text evidence="1">Located on the platform of the 30S subunit, it bridges several disparate RNA helices of the 16S rRNA. Forms part of the Shine-Dalgarno cleft in the 70S ribosome.</text>
</comment>
<comment type="subunit">
    <text evidence="1">Part of the 30S ribosomal subunit. Interacts with proteins S7 and S18. Binds to IF-3.</text>
</comment>
<comment type="similarity">
    <text evidence="1">Belongs to the universal ribosomal protein uS11 family.</text>
</comment>
<keyword id="KW-0687">Ribonucleoprotein</keyword>
<keyword id="KW-0689">Ribosomal protein</keyword>
<keyword id="KW-0694">RNA-binding</keyword>
<keyword id="KW-0699">rRNA-binding</keyword>
<evidence type="ECO:0000255" key="1">
    <source>
        <dbReference type="HAMAP-Rule" id="MF_01310"/>
    </source>
</evidence>
<evidence type="ECO:0000305" key="2"/>
<organism>
    <name type="scientific">Legionella pneumophila (strain Lens)</name>
    <dbReference type="NCBI Taxonomy" id="297245"/>
    <lineage>
        <taxon>Bacteria</taxon>
        <taxon>Pseudomonadati</taxon>
        <taxon>Pseudomonadota</taxon>
        <taxon>Gammaproteobacteria</taxon>
        <taxon>Legionellales</taxon>
        <taxon>Legionellaceae</taxon>
        <taxon>Legionella</taxon>
    </lineage>
</organism>
<proteinExistence type="inferred from homology"/>
<protein>
    <recommendedName>
        <fullName evidence="1">Small ribosomal subunit protein uS11</fullName>
    </recommendedName>
    <alternativeName>
        <fullName evidence="2">30S ribosomal protein S11</fullName>
    </alternativeName>
</protein>
<sequence length="132" mass="14366">MAITKSKQQKTRKKVKRVVSDGIVHIHASFNNTIVTFTDRQGNALCWATSGGSGFRGSRKSTPYAAQVATERAAAVAKEYGMKSVAVFVHGPGPGRESTIRELITQDFKIVEITDVTGIPHNGCKPPKKRRV</sequence>